<dbReference type="EMBL" id="CP000569">
    <property type="protein sequence ID" value="ABN75041.1"/>
    <property type="molecule type" value="Genomic_DNA"/>
</dbReference>
<dbReference type="RefSeq" id="WP_005620316.1">
    <property type="nucleotide sequence ID" value="NC_009053.1"/>
</dbReference>
<dbReference type="SMR" id="A3N3Q5"/>
<dbReference type="STRING" id="416269.APL_1967"/>
<dbReference type="EnsemblBacteria" id="ABN75041">
    <property type="protein sequence ID" value="ABN75041"/>
    <property type="gene ID" value="APL_1967"/>
</dbReference>
<dbReference type="GeneID" id="48600268"/>
<dbReference type="KEGG" id="apl:APL_1967"/>
<dbReference type="eggNOG" id="COG1309">
    <property type="taxonomic scope" value="Bacteria"/>
</dbReference>
<dbReference type="HOGENOM" id="CLU_069356_5_0_6"/>
<dbReference type="Proteomes" id="UP000001432">
    <property type="component" value="Chromosome"/>
</dbReference>
<dbReference type="GO" id="GO:0043590">
    <property type="term" value="C:bacterial nucleoid"/>
    <property type="evidence" value="ECO:0007669"/>
    <property type="project" value="UniProtKB-UniRule"/>
</dbReference>
<dbReference type="GO" id="GO:0005737">
    <property type="term" value="C:cytoplasm"/>
    <property type="evidence" value="ECO:0007669"/>
    <property type="project" value="UniProtKB-UniRule"/>
</dbReference>
<dbReference type="GO" id="GO:0043565">
    <property type="term" value="F:sequence-specific DNA binding"/>
    <property type="evidence" value="ECO:0007669"/>
    <property type="project" value="UniProtKB-UniRule"/>
</dbReference>
<dbReference type="GO" id="GO:0051301">
    <property type="term" value="P:cell division"/>
    <property type="evidence" value="ECO:0007669"/>
    <property type="project" value="UniProtKB-KW"/>
</dbReference>
<dbReference type="GO" id="GO:0010974">
    <property type="term" value="P:negative regulation of division septum assembly"/>
    <property type="evidence" value="ECO:0007669"/>
    <property type="project" value="InterPro"/>
</dbReference>
<dbReference type="Gene3D" id="1.10.357.10">
    <property type="entry name" value="Tetracycline Repressor, domain 2"/>
    <property type="match status" value="1"/>
</dbReference>
<dbReference type="HAMAP" id="MF_01839">
    <property type="entry name" value="NO_factor_SlmA"/>
    <property type="match status" value="1"/>
</dbReference>
<dbReference type="InterPro" id="IPR023772">
    <property type="entry name" value="DNA-bd_HTH_TetR-type_CS"/>
</dbReference>
<dbReference type="InterPro" id="IPR009057">
    <property type="entry name" value="Homeodomain-like_sf"/>
</dbReference>
<dbReference type="InterPro" id="IPR050624">
    <property type="entry name" value="HTH-type_Tx_Regulator"/>
</dbReference>
<dbReference type="InterPro" id="IPR001647">
    <property type="entry name" value="HTH_TetR"/>
</dbReference>
<dbReference type="InterPro" id="IPR023769">
    <property type="entry name" value="NO_SlmA"/>
</dbReference>
<dbReference type="InterPro" id="IPR054580">
    <property type="entry name" value="SlmA-like_C"/>
</dbReference>
<dbReference type="NCBIfam" id="NF007015">
    <property type="entry name" value="PRK09480.1"/>
    <property type="match status" value="1"/>
</dbReference>
<dbReference type="PANTHER" id="PTHR43479">
    <property type="entry name" value="ACREF/ENVCD OPERON REPRESSOR-RELATED"/>
    <property type="match status" value="1"/>
</dbReference>
<dbReference type="PANTHER" id="PTHR43479:SF11">
    <property type="entry name" value="ACREF_ENVCD OPERON REPRESSOR-RELATED"/>
    <property type="match status" value="1"/>
</dbReference>
<dbReference type="Pfam" id="PF22276">
    <property type="entry name" value="SlmA-like_C"/>
    <property type="match status" value="1"/>
</dbReference>
<dbReference type="Pfam" id="PF00440">
    <property type="entry name" value="TetR_N"/>
    <property type="match status" value="1"/>
</dbReference>
<dbReference type="SUPFAM" id="SSF46689">
    <property type="entry name" value="Homeodomain-like"/>
    <property type="match status" value="1"/>
</dbReference>
<dbReference type="PROSITE" id="PS01081">
    <property type="entry name" value="HTH_TETR_1"/>
    <property type="match status" value="1"/>
</dbReference>
<dbReference type="PROSITE" id="PS50977">
    <property type="entry name" value="HTH_TETR_2"/>
    <property type="match status" value="1"/>
</dbReference>
<feature type="chain" id="PRO_1000070512" description="Nucleoid occlusion factor SlmA">
    <location>
        <begin position="1"/>
        <end position="202"/>
    </location>
</feature>
<feature type="domain" description="HTH tetR-type" evidence="1">
    <location>
        <begin position="14"/>
        <end position="75"/>
    </location>
</feature>
<feature type="DNA-binding region" description="H-T-H motif" evidence="1">
    <location>
        <begin position="38"/>
        <end position="57"/>
    </location>
</feature>
<proteinExistence type="inferred from homology"/>
<keyword id="KW-0131">Cell cycle</keyword>
<keyword id="KW-0132">Cell division</keyword>
<keyword id="KW-0963">Cytoplasm</keyword>
<keyword id="KW-0238">DNA-binding</keyword>
<keyword id="KW-1185">Reference proteome</keyword>
<protein>
    <recommendedName>
        <fullName evidence="1">Nucleoid occlusion factor SlmA</fullName>
    </recommendedName>
</protein>
<organism>
    <name type="scientific">Actinobacillus pleuropneumoniae serotype 5b (strain L20)</name>
    <dbReference type="NCBI Taxonomy" id="416269"/>
    <lineage>
        <taxon>Bacteria</taxon>
        <taxon>Pseudomonadati</taxon>
        <taxon>Pseudomonadota</taxon>
        <taxon>Gammaproteobacteria</taxon>
        <taxon>Pasteurellales</taxon>
        <taxon>Pasteurellaceae</taxon>
        <taxon>Actinobacillus</taxon>
    </lineage>
</organism>
<accession>A3N3Q5</accession>
<evidence type="ECO:0000255" key="1">
    <source>
        <dbReference type="HAMAP-Rule" id="MF_01839"/>
    </source>
</evidence>
<sequence length="202" mass="23307">MIQPTVKMPKKSVKERQQQVLEVLIGLLNSEDGMQRVTTERLAKAVGVSEGALYRYFPSKTKMFEALIERIEQTLTGYINASKRKENTTASTVKAILYTVIEFARKNPGVTRILTGHALMFEDDQLKARVAKFFDGLEFQFANILQMSKLREGKTFEDERALAGYLVNFCEGQFLRLVRSNFSYNQHQHFEKQWALIKPLFE</sequence>
<reference key="1">
    <citation type="journal article" date="2008" name="J. Bacteriol.">
        <title>The complete genome sequence of Actinobacillus pleuropneumoniae L20 (serotype 5b).</title>
        <authorList>
            <person name="Foote S.J."/>
            <person name="Bosse J.T."/>
            <person name="Bouevitch A.B."/>
            <person name="Langford P.R."/>
            <person name="Young N.M."/>
            <person name="Nash J.H.E."/>
        </authorList>
    </citation>
    <scope>NUCLEOTIDE SEQUENCE [LARGE SCALE GENOMIC DNA]</scope>
    <source>
        <strain>L20</strain>
    </source>
</reference>
<gene>
    <name evidence="1" type="primary">slmA</name>
    <name type="ordered locus">APL_1967</name>
</gene>
<comment type="function">
    <text evidence="1">Required for nucleoid occlusion (NO) phenomenon, which prevents Z-ring formation and cell division over the nucleoid. Acts as a DNA-associated cell division inhibitor that binds simultaneously chromosomal DNA and FtsZ, and disrupts the assembly of FtsZ polymers. SlmA-DNA-binding sequences (SBS) are dispersed on non-Ter regions of the chromosome, preventing FtsZ polymerization at these regions.</text>
</comment>
<comment type="subunit">
    <text evidence="1">Homodimer. Interacts with FtsZ.</text>
</comment>
<comment type="subcellular location">
    <subcellularLocation>
        <location evidence="1">Cytoplasm</location>
        <location evidence="1">Nucleoid</location>
    </subcellularLocation>
</comment>
<comment type="similarity">
    <text evidence="1">Belongs to the nucleoid occlusion factor SlmA family.</text>
</comment>
<name>SLMA_ACTP2</name>